<sequence length="545" mass="61659">MLPRLGFARTARSIHRFKMTQISKPFFHSTEVGKPGPQQKLSKSYTAVFKKWFVRGLKLTFYTTLAGTLYVSYELYKESNPPKQVPQSTAFANGLKKKELVILGTGWGAISLLKKLDTSLYNVTVVSPRSFFLFTPLLPSTPVGTIEMKSIVEPVRSIARRTPGEVHYIEAEALDVDPKAKKVMVQSVSEDEYFVSSLSYDYLVVSVGAKTTTFNIPGVYGNANFLKEIEDAQNIRMKLMKTIEQASSFPVNDPERKRLLTFVVVGGGPTGVEFAAELQDYINQDLRKWMPDLSKEMKVILIEALPNILNMFDKTLIKYAEDLFARDEIDLQVNTAVKVVEPTYIRTLQNGQTNTDIEYGMLVWATGNEPIDFSKTLMSRIPEQTNRRGLLINDKLELLGSENSIYAIGDCTAHTGFFPTAQVAHQEGEYLAKILDKKLQIEQLEWDMLNSTDETEVSRLQKEVNLRKSKLDKFNYKHMGALAYIGSETAIADLHMGDSSYQLKGMFAFLFWKSAYLAMCLSIRNRILIAMDWTKVYFLGRDSSV</sequence>
<organism>
    <name type="scientific">Saccharomyces cerevisiae (strain ATCC 204508 / S288c)</name>
    <name type="common">Baker's yeast</name>
    <dbReference type="NCBI Taxonomy" id="559292"/>
    <lineage>
        <taxon>Eukaryota</taxon>
        <taxon>Fungi</taxon>
        <taxon>Dikarya</taxon>
        <taxon>Ascomycota</taxon>
        <taxon>Saccharomycotina</taxon>
        <taxon>Saccharomycetes</taxon>
        <taxon>Saccharomycetales</taxon>
        <taxon>Saccharomycetaceae</taxon>
        <taxon>Saccharomyces</taxon>
    </lineage>
</organism>
<keyword id="KW-0274">FAD</keyword>
<keyword id="KW-0285">Flavoprotein</keyword>
<keyword id="KW-0496">Mitochondrion</keyword>
<keyword id="KW-0520">NAD</keyword>
<keyword id="KW-0560">Oxidoreductase</keyword>
<keyword id="KW-1185">Reference proteome</keyword>
<keyword id="KW-0809">Transit peptide</keyword>
<reference key="1">
    <citation type="journal article" date="1997" name="Nature">
        <title>The nucleotide sequence of Saccharomyces cerevisiae chromosome IV.</title>
        <authorList>
            <person name="Jacq C."/>
            <person name="Alt-Moerbe J."/>
            <person name="Andre B."/>
            <person name="Arnold W."/>
            <person name="Bahr A."/>
            <person name="Ballesta J.P.G."/>
            <person name="Bargues M."/>
            <person name="Baron L."/>
            <person name="Becker A."/>
            <person name="Biteau N."/>
            <person name="Bloecker H."/>
            <person name="Blugeon C."/>
            <person name="Boskovic J."/>
            <person name="Brandt P."/>
            <person name="Brueckner M."/>
            <person name="Buitrago M.J."/>
            <person name="Coster F."/>
            <person name="Delaveau T."/>
            <person name="del Rey F."/>
            <person name="Dujon B."/>
            <person name="Eide L.G."/>
            <person name="Garcia-Cantalejo J.M."/>
            <person name="Goffeau A."/>
            <person name="Gomez-Peris A."/>
            <person name="Granotier C."/>
            <person name="Hanemann V."/>
            <person name="Hankeln T."/>
            <person name="Hoheisel J.D."/>
            <person name="Jaeger W."/>
            <person name="Jimenez A."/>
            <person name="Jonniaux J.-L."/>
            <person name="Kraemer C."/>
            <person name="Kuester H."/>
            <person name="Laamanen P."/>
            <person name="Legros Y."/>
            <person name="Louis E.J."/>
            <person name="Moeller-Rieker S."/>
            <person name="Monnet A."/>
            <person name="Moro M."/>
            <person name="Mueller-Auer S."/>
            <person name="Nussbaumer B."/>
            <person name="Paricio N."/>
            <person name="Paulin L."/>
            <person name="Perea J."/>
            <person name="Perez-Alonso M."/>
            <person name="Perez-Ortin J.E."/>
            <person name="Pohl T.M."/>
            <person name="Prydz H."/>
            <person name="Purnelle B."/>
            <person name="Rasmussen S.W."/>
            <person name="Remacha M.A."/>
            <person name="Revuelta J.L."/>
            <person name="Rieger M."/>
            <person name="Salom D."/>
            <person name="Saluz H.P."/>
            <person name="Saiz J.E."/>
            <person name="Saren A.-M."/>
            <person name="Schaefer M."/>
            <person name="Scharfe M."/>
            <person name="Schmidt E.R."/>
            <person name="Schneider C."/>
            <person name="Scholler P."/>
            <person name="Schwarz S."/>
            <person name="Soler-Mira A."/>
            <person name="Urrestarazu L.A."/>
            <person name="Verhasselt P."/>
            <person name="Vissers S."/>
            <person name="Voet M."/>
            <person name="Volckaert G."/>
            <person name="Wagner G."/>
            <person name="Wambutt R."/>
            <person name="Wedler E."/>
            <person name="Wedler H."/>
            <person name="Woelfl S."/>
            <person name="Harris D.E."/>
            <person name="Bowman S."/>
            <person name="Brown D."/>
            <person name="Churcher C.M."/>
            <person name="Connor R."/>
            <person name="Dedman K."/>
            <person name="Gentles S."/>
            <person name="Hamlin N."/>
            <person name="Hunt S."/>
            <person name="Jones L."/>
            <person name="McDonald S."/>
            <person name="Murphy L.D."/>
            <person name="Niblett D."/>
            <person name="Odell C."/>
            <person name="Oliver K."/>
            <person name="Rajandream M.A."/>
            <person name="Richards C."/>
            <person name="Shore L."/>
            <person name="Walsh S.V."/>
            <person name="Barrell B.G."/>
            <person name="Dietrich F.S."/>
            <person name="Mulligan J.T."/>
            <person name="Allen E."/>
            <person name="Araujo R."/>
            <person name="Aviles E."/>
            <person name="Berno A."/>
            <person name="Carpenter J."/>
            <person name="Chen E."/>
            <person name="Cherry J.M."/>
            <person name="Chung E."/>
            <person name="Duncan M."/>
            <person name="Hunicke-Smith S."/>
            <person name="Hyman R.W."/>
            <person name="Komp C."/>
            <person name="Lashkari D."/>
            <person name="Lew H."/>
            <person name="Lin D."/>
            <person name="Mosedale D."/>
            <person name="Nakahara K."/>
            <person name="Namath A."/>
            <person name="Oefner P."/>
            <person name="Oh C."/>
            <person name="Petel F.X."/>
            <person name="Roberts D."/>
            <person name="Schramm S."/>
            <person name="Schroeder M."/>
            <person name="Shogren T."/>
            <person name="Shroff N."/>
            <person name="Winant A."/>
            <person name="Yelton M.A."/>
            <person name="Botstein D."/>
            <person name="Davis R.W."/>
            <person name="Johnston M."/>
            <person name="Andrews S."/>
            <person name="Brinkman R."/>
            <person name="Cooper J."/>
            <person name="Ding H."/>
            <person name="Du Z."/>
            <person name="Favello A."/>
            <person name="Fulton L."/>
            <person name="Gattung S."/>
            <person name="Greco T."/>
            <person name="Hallsworth K."/>
            <person name="Hawkins J."/>
            <person name="Hillier L.W."/>
            <person name="Jier M."/>
            <person name="Johnson D."/>
            <person name="Johnston L."/>
            <person name="Kirsten J."/>
            <person name="Kucaba T."/>
            <person name="Langston Y."/>
            <person name="Latreille P."/>
            <person name="Le T."/>
            <person name="Mardis E."/>
            <person name="Menezes S."/>
            <person name="Miller N."/>
            <person name="Nhan M."/>
            <person name="Pauley A."/>
            <person name="Peluso D."/>
            <person name="Rifkin L."/>
            <person name="Riles L."/>
            <person name="Taich A."/>
            <person name="Trevaskis E."/>
            <person name="Vignati D."/>
            <person name="Wilcox L."/>
            <person name="Wohldman P."/>
            <person name="Vaudin M."/>
            <person name="Wilson R."/>
            <person name="Waterston R."/>
            <person name="Albermann K."/>
            <person name="Hani J."/>
            <person name="Heumann K."/>
            <person name="Kleine K."/>
            <person name="Mewes H.-W."/>
            <person name="Zollner A."/>
            <person name="Zaccaria P."/>
        </authorList>
    </citation>
    <scope>NUCLEOTIDE SEQUENCE [LARGE SCALE GENOMIC DNA]</scope>
    <source>
        <strain>ATCC 204508 / S288c</strain>
    </source>
</reference>
<reference key="2">
    <citation type="journal article" date="2014" name="G3 (Bethesda)">
        <title>The reference genome sequence of Saccharomyces cerevisiae: Then and now.</title>
        <authorList>
            <person name="Engel S.R."/>
            <person name="Dietrich F.S."/>
            <person name="Fisk D.G."/>
            <person name="Binkley G."/>
            <person name="Balakrishnan R."/>
            <person name="Costanzo M.C."/>
            <person name="Dwight S.S."/>
            <person name="Hitz B.C."/>
            <person name="Karra K."/>
            <person name="Nash R.S."/>
            <person name="Weng S."/>
            <person name="Wong E.D."/>
            <person name="Lloyd P."/>
            <person name="Skrzypek M.S."/>
            <person name="Miyasato S.R."/>
            <person name="Simison M."/>
            <person name="Cherry J.M."/>
        </authorList>
    </citation>
    <scope>GENOME REANNOTATION</scope>
    <source>
        <strain>ATCC 204508 / S288c</strain>
    </source>
</reference>
<reference key="3">
    <citation type="journal article" date="1998" name="J. Biol. Chem.">
        <title>The Saccharomyces cerevisiae NDE1 and NDE2 genes encode separate mitochondrial NADH dehydrogenases catalyzing the oxidation of cytosolic NADH.</title>
        <authorList>
            <person name="Luttik M.A.H."/>
            <person name="Overkamp K.M."/>
            <person name="Koetter P."/>
            <person name="de Vries S."/>
            <person name="van Dijken J.P."/>
            <person name="Pronk J.T."/>
        </authorList>
    </citation>
    <scope>FUNCTION</scope>
</reference>
<reference key="4">
    <citation type="journal article" date="2000" name="J. Bacteriol.">
        <title>In vivo analysis of the mechanisms for oxidation of cytosolic NADH by Saccharomyces cerevisiae mitochondria.</title>
        <authorList>
            <person name="Overkamp K.M."/>
            <person name="Bakker B.M."/>
            <person name="Koetter P."/>
            <person name="van Tuijl A."/>
            <person name="de Vries S."/>
            <person name="van Dijken J.P."/>
            <person name="Pronk J.T."/>
        </authorList>
    </citation>
    <scope>FUNCTION</scope>
</reference>
<reference key="5">
    <citation type="journal article" date="2001" name="Biochemistry">
        <title>Yeast mitochondrial dehydrogenases are associated in a supramolecular complex.</title>
        <authorList>
            <person name="Grandier-Vazeille X."/>
            <person name="Bathany K."/>
            <person name="Chaignepain S."/>
            <person name="Camougrand N."/>
            <person name="Manon S."/>
            <person name="Schmitter J.-M."/>
        </authorList>
    </citation>
    <scope>FUNCTION</scope>
    <scope>IDENTIFICATION BY MASS SPECTROMETRY</scope>
</reference>
<reference key="6">
    <citation type="journal article" date="2001" name="Mol. Cell. Biol.">
        <title>Mitochondrial respiratory electron carriers are involved in oxidative stress during heat stress in Saccharomyces cerevisiae.</title>
        <authorList>
            <person name="Davidson J.F."/>
            <person name="Schiestl R.H."/>
        </authorList>
    </citation>
    <scope>FUNCTION</scope>
</reference>
<reference key="7">
    <citation type="journal article" date="2002" name="J. Biol. Chem.">
        <title>Kinetic regulation of the mitochondrial glycerol-3-phosphate dehydrogenase by the external NADH dehydrogenase in Saccharomyces cerevisiae.</title>
        <authorList>
            <person name="Paahlman I.-L."/>
            <person name="Larsson C."/>
            <person name="Averet N."/>
            <person name="Bunoust O."/>
            <person name="Boubekeur S."/>
            <person name="Gustafsson L."/>
            <person name="Rigoulet M."/>
        </authorList>
    </citation>
    <scope>FUNCTION</scope>
</reference>
<reference key="8">
    <citation type="journal article" date="2003" name="Proc. Natl. Acad. Sci. U.S.A.">
        <title>The proteome of Saccharomyces cerevisiae mitochondria.</title>
        <authorList>
            <person name="Sickmann A."/>
            <person name="Reinders J."/>
            <person name="Wagner Y."/>
            <person name="Joppich C."/>
            <person name="Zahedi R.P."/>
            <person name="Meyer H.E."/>
            <person name="Schoenfisch B."/>
            <person name="Perschil I."/>
            <person name="Chacinska A."/>
            <person name="Guiard B."/>
            <person name="Rehling P."/>
            <person name="Pfanner N."/>
            <person name="Meisinger C."/>
        </authorList>
    </citation>
    <scope>SUBCELLULAR LOCATION [LARGE SCALE ANALYSIS]</scope>
    <source>
        <strain>ATCC 76625 / YPH499</strain>
    </source>
</reference>
<protein>
    <recommendedName>
        <fullName>External NADH-ubiquinone oxidoreductase 2, mitochondrial</fullName>
        <ecNumber>1.6.5.9</ecNumber>
    </recommendedName>
    <alternativeName>
        <fullName>External NADH dehydrogenase 2</fullName>
    </alternativeName>
</protein>
<gene>
    <name type="primary">NDE2</name>
    <name type="synonym">NDH2</name>
    <name type="ordered locus">YDL085W</name>
</gene>
<evidence type="ECO:0000250" key="1"/>
<evidence type="ECO:0000255" key="2"/>
<evidence type="ECO:0000269" key="3">
    <source>
    </source>
</evidence>
<evidence type="ECO:0000269" key="4">
    <source>
    </source>
</evidence>
<evidence type="ECO:0000269" key="5">
    <source>
    </source>
</evidence>
<evidence type="ECO:0000269" key="6">
    <source>
    </source>
</evidence>
<evidence type="ECO:0000269" key="7">
    <source>
    </source>
</evidence>
<evidence type="ECO:0000269" key="8">
    <source>
    </source>
</evidence>
<evidence type="ECO:0000305" key="9"/>
<comment type="function">
    <text evidence="3 4 5 6 8">External NADH dehydrogenase required for optimum cellular growth with a number of nonfermentable carbon sources, including ethanol. With NDE1, performes the mitochondrial oxidation of cytosolic NADH under these growth conditions. Regulates the mitochondrial glycerol-3-phosphate dehydrogenase, GUT2, also involved in cytosolic NADH oxidation.</text>
</comment>
<comment type="catalytic activity">
    <reaction>
        <text>a quinone + NADH + H(+) = a quinol + NAD(+)</text>
        <dbReference type="Rhea" id="RHEA:46160"/>
        <dbReference type="ChEBI" id="CHEBI:15378"/>
        <dbReference type="ChEBI" id="CHEBI:24646"/>
        <dbReference type="ChEBI" id="CHEBI:57540"/>
        <dbReference type="ChEBI" id="CHEBI:57945"/>
        <dbReference type="ChEBI" id="CHEBI:132124"/>
        <dbReference type="EC" id="1.6.5.9"/>
    </reaction>
</comment>
<comment type="catalytic activity">
    <reaction>
        <text>a ubiquinone + NADH + H(+) = a ubiquinol + NAD(+)</text>
        <dbReference type="Rhea" id="RHEA:23152"/>
        <dbReference type="Rhea" id="RHEA-COMP:9565"/>
        <dbReference type="Rhea" id="RHEA-COMP:9566"/>
        <dbReference type="ChEBI" id="CHEBI:15378"/>
        <dbReference type="ChEBI" id="CHEBI:16389"/>
        <dbReference type="ChEBI" id="CHEBI:17976"/>
        <dbReference type="ChEBI" id="CHEBI:57540"/>
        <dbReference type="ChEBI" id="CHEBI:57945"/>
    </reaction>
</comment>
<comment type="subcellular location">
    <subcellularLocation>
        <location evidence="7">Mitochondrion intermembrane space</location>
    </subcellularLocation>
</comment>
<comment type="similarity">
    <text evidence="9">Belongs to the NADH dehydrogenase family.</text>
</comment>
<name>NDH2_YEAST</name>
<feature type="transit peptide" description="Mitochondrion" evidence="2">
    <location>
        <begin position="1"/>
        <end position="21"/>
    </location>
</feature>
<feature type="chain" id="PRO_0000268687" description="External NADH-ubiquinone oxidoreductase 2, mitochondrial">
    <location>
        <begin position="22"/>
        <end position="545"/>
    </location>
</feature>
<feature type="binding site" evidence="1">
    <location>
        <begin position="99"/>
        <end position="129"/>
    </location>
    <ligand>
        <name>FAD</name>
        <dbReference type="ChEBI" id="CHEBI:57692"/>
    </ligand>
</feature>
<feature type="binding site" evidence="1">
    <location>
        <begin position="260"/>
        <end position="296"/>
    </location>
    <ligand>
        <name>NAD(+)</name>
        <dbReference type="ChEBI" id="CHEBI:57540"/>
    </ligand>
</feature>
<dbReference type="EC" id="1.6.5.9"/>
<dbReference type="EMBL" id="Z74133">
    <property type="protein sequence ID" value="CAA98651.1"/>
    <property type="molecule type" value="Genomic_DNA"/>
</dbReference>
<dbReference type="EMBL" id="BK006938">
    <property type="protein sequence ID" value="DAA11774.1"/>
    <property type="molecule type" value="Genomic_DNA"/>
</dbReference>
<dbReference type="PIR" id="S67621">
    <property type="entry name" value="S67621"/>
</dbReference>
<dbReference type="RefSeq" id="NP_010198.1">
    <property type="nucleotide sequence ID" value="NM_001180144.1"/>
</dbReference>
<dbReference type="SMR" id="Q07500"/>
<dbReference type="BioGRID" id="31976">
    <property type="interactions" value="100"/>
</dbReference>
<dbReference type="DIP" id="DIP-5023N"/>
<dbReference type="FunCoup" id="Q07500">
    <property type="interactions" value="197"/>
</dbReference>
<dbReference type="IntAct" id="Q07500">
    <property type="interactions" value="6"/>
</dbReference>
<dbReference type="MINT" id="Q07500"/>
<dbReference type="STRING" id="4932.YDL085W"/>
<dbReference type="GlyGen" id="Q07500">
    <property type="glycosylation" value="1 site"/>
</dbReference>
<dbReference type="iPTMnet" id="Q07500"/>
<dbReference type="PaxDb" id="4932-YDL085W"/>
<dbReference type="PeptideAtlas" id="Q07500"/>
<dbReference type="EnsemblFungi" id="YDL085W_mRNA">
    <property type="protein sequence ID" value="YDL085W"/>
    <property type="gene ID" value="YDL085W"/>
</dbReference>
<dbReference type="GeneID" id="851474"/>
<dbReference type="KEGG" id="sce:YDL085W"/>
<dbReference type="AGR" id="SGD:S000002243"/>
<dbReference type="SGD" id="S000002243">
    <property type="gene designation" value="NDE2"/>
</dbReference>
<dbReference type="VEuPathDB" id="FungiDB:YDL085W"/>
<dbReference type="eggNOG" id="KOG2495">
    <property type="taxonomic scope" value="Eukaryota"/>
</dbReference>
<dbReference type="GeneTree" id="ENSGT00940000176602"/>
<dbReference type="HOGENOM" id="CLU_021377_1_0_1"/>
<dbReference type="InParanoid" id="Q07500"/>
<dbReference type="OMA" id="RGIFQYR"/>
<dbReference type="OrthoDB" id="3244603at2759"/>
<dbReference type="BioCyc" id="MetaCyc:G3O-29494-MONOMER"/>
<dbReference type="BioCyc" id="YEAST:G3O-29494-MONOMER"/>
<dbReference type="SABIO-RK" id="Q07500"/>
<dbReference type="BioGRID-ORCS" id="851474">
    <property type="hits" value="0 hits in 10 CRISPR screens"/>
</dbReference>
<dbReference type="PRO" id="PR:Q07500"/>
<dbReference type="Proteomes" id="UP000002311">
    <property type="component" value="Chromosome IV"/>
</dbReference>
<dbReference type="RNAct" id="Q07500">
    <property type="molecule type" value="protein"/>
</dbReference>
<dbReference type="GO" id="GO:0005758">
    <property type="term" value="C:mitochondrial intermembrane space"/>
    <property type="evidence" value="ECO:0007669"/>
    <property type="project" value="UniProtKB-SubCell"/>
</dbReference>
<dbReference type="GO" id="GO:0005739">
    <property type="term" value="C:mitochondrion"/>
    <property type="evidence" value="ECO:0000314"/>
    <property type="project" value="SGD"/>
</dbReference>
<dbReference type="GO" id="GO:0003954">
    <property type="term" value="F:NADH dehydrogenase activity"/>
    <property type="evidence" value="ECO:0000250"/>
    <property type="project" value="SGD"/>
</dbReference>
<dbReference type="GO" id="GO:0050136">
    <property type="term" value="F:NADH:ubiquinone reductase (non-electrogenic) activity"/>
    <property type="evidence" value="ECO:0007669"/>
    <property type="project" value="UniProtKB-EC"/>
</dbReference>
<dbReference type="GO" id="GO:0016491">
    <property type="term" value="F:oxidoreductase activity"/>
    <property type="evidence" value="ECO:0000318"/>
    <property type="project" value="GO_Central"/>
</dbReference>
<dbReference type="GO" id="GO:0019655">
    <property type="term" value="P:glycolytic fermentation to ethanol"/>
    <property type="evidence" value="ECO:0000315"/>
    <property type="project" value="SGD"/>
</dbReference>
<dbReference type="FunFam" id="3.50.50.100:FF:000007">
    <property type="entry name" value="Rotenone-insensitive NADH-ubiquinone oxidoreductase, mitochondrial"/>
    <property type="match status" value="1"/>
</dbReference>
<dbReference type="Gene3D" id="3.50.50.100">
    <property type="match status" value="1"/>
</dbReference>
<dbReference type="InterPro" id="IPR036188">
    <property type="entry name" value="FAD/NAD-bd_sf"/>
</dbReference>
<dbReference type="InterPro" id="IPR023753">
    <property type="entry name" value="FAD/NAD-binding_dom"/>
</dbReference>
<dbReference type="InterPro" id="IPR045024">
    <property type="entry name" value="NDH-2"/>
</dbReference>
<dbReference type="InterPro" id="IPR054585">
    <property type="entry name" value="NDH2-like_C"/>
</dbReference>
<dbReference type="PANTHER" id="PTHR43706:SF47">
    <property type="entry name" value="EXTERNAL NADH-UBIQUINONE OXIDOREDUCTASE 1, MITOCHONDRIAL-RELATED"/>
    <property type="match status" value="1"/>
</dbReference>
<dbReference type="PANTHER" id="PTHR43706">
    <property type="entry name" value="NADH DEHYDROGENASE"/>
    <property type="match status" value="1"/>
</dbReference>
<dbReference type="Pfam" id="PF22366">
    <property type="entry name" value="NDH2_C"/>
    <property type="match status" value="1"/>
</dbReference>
<dbReference type="Pfam" id="PF07992">
    <property type="entry name" value="Pyr_redox_2"/>
    <property type="match status" value="1"/>
</dbReference>
<dbReference type="PRINTS" id="PR00368">
    <property type="entry name" value="FADPNR"/>
</dbReference>
<dbReference type="SUPFAM" id="SSF51905">
    <property type="entry name" value="FAD/NAD(P)-binding domain"/>
    <property type="match status" value="2"/>
</dbReference>
<proteinExistence type="evidence at protein level"/>
<accession>Q07500</accession>
<accession>D6VRR4</accession>